<organism>
    <name type="scientific">Gloeothece citriformis (strain PCC 7424)</name>
    <name type="common">Cyanothece sp. (strain PCC 7424)</name>
    <dbReference type="NCBI Taxonomy" id="65393"/>
    <lineage>
        <taxon>Bacteria</taxon>
        <taxon>Bacillati</taxon>
        <taxon>Cyanobacteriota</taxon>
        <taxon>Cyanophyceae</taxon>
        <taxon>Oscillatoriophycideae</taxon>
        <taxon>Chroococcales</taxon>
        <taxon>Aphanothecaceae</taxon>
        <taxon>Gloeothece</taxon>
        <taxon>Gloeothece citriformis</taxon>
    </lineage>
</organism>
<evidence type="ECO:0000255" key="1">
    <source>
        <dbReference type="HAMAP-Rule" id="MF_00144"/>
    </source>
</evidence>
<proteinExistence type="inferred from homology"/>
<dbReference type="EC" id="2.8.1.13" evidence="1"/>
<dbReference type="EMBL" id="CP001291">
    <property type="protein sequence ID" value="ACK70640.1"/>
    <property type="molecule type" value="Genomic_DNA"/>
</dbReference>
<dbReference type="RefSeq" id="WP_015954245.1">
    <property type="nucleotide sequence ID" value="NC_011729.1"/>
</dbReference>
<dbReference type="SMR" id="B7KHE5"/>
<dbReference type="STRING" id="65393.PCC7424_2218"/>
<dbReference type="KEGG" id="cyc:PCC7424_2218"/>
<dbReference type="eggNOG" id="COG0482">
    <property type="taxonomic scope" value="Bacteria"/>
</dbReference>
<dbReference type="HOGENOM" id="CLU_035188_0_0_3"/>
<dbReference type="OrthoDB" id="9800696at2"/>
<dbReference type="Proteomes" id="UP000002384">
    <property type="component" value="Chromosome"/>
</dbReference>
<dbReference type="GO" id="GO:0005737">
    <property type="term" value="C:cytoplasm"/>
    <property type="evidence" value="ECO:0007669"/>
    <property type="project" value="UniProtKB-SubCell"/>
</dbReference>
<dbReference type="GO" id="GO:0005524">
    <property type="term" value="F:ATP binding"/>
    <property type="evidence" value="ECO:0007669"/>
    <property type="project" value="UniProtKB-KW"/>
</dbReference>
<dbReference type="GO" id="GO:0000049">
    <property type="term" value="F:tRNA binding"/>
    <property type="evidence" value="ECO:0007669"/>
    <property type="project" value="UniProtKB-KW"/>
</dbReference>
<dbReference type="GO" id="GO:0103016">
    <property type="term" value="F:tRNA-uridine 2-sulfurtransferase activity"/>
    <property type="evidence" value="ECO:0007669"/>
    <property type="project" value="UniProtKB-EC"/>
</dbReference>
<dbReference type="GO" id="GO:0002143">
    <property type="term" value="P:tRNA wobble position uridine thiolation"/>
    <property type="evidence" value="ECO:0007669"/>
    <property type="project" value="TreeGrafter"/>
</dbReference>
<dbReference type="CDD" id="cd01998">
    <property type="entry name" value="MnmA_TRMU-like"/>
    <property type="match status" value="1"/>
</dbReference>
<dbReference type="FunFam" id="2.30.30.280:FF:000001">
    <property type="entry name" value="tRNA-specific 2-thiouridylase MnmA"/>
    <property type="match status" value="1"/>
</dbReference>
<dbReference type="FunFam" id="2.40.30.10:FF:000023">
    <property type="entry name" value="tRNA-specific 2-thiouridylase MnmA"/>
    <property type="match status" value="1"/>
</dbReference>
<dbReference type="FunFam" id="3.40.50.620:FF:000302">
    <property type="entry name" value="tRNA-specific 2-thiouridylase MnmA"/>
    <property type="match status" value="1"/>
</dbReference>
<dbReference type="Gene3D" id="2.30.30.280">
    <property type="entry name" value="Adenine nucleotide alpha hydrolases-like domains"/>
    <property type="match status" value="1"/>
</dbReference>
<dbReference type="Gene3D" id="3.40.50.620">
    <property type="entry name" value="HUPs"/>
    <property type="match status" value="1"/>
</dbReference>
<dbReference type="Gene3D" id="2.40.30.10">
    <property type="entry name" value="Translation factors"/>
    <property type="match status" value="1"/>
</dbReference>
<dbReference type="HAMAP" id="MF_00144">
    <property type="entry name" value="tRNA_thiouridyl_MnmA"/>
    <property type="match status" value="1"/>
</dbReference>
<dbReference type="InterPro" id="IPR004506">
    <property type="entry name" value="MnmA-like"/>
</dbReference>
<dbReference type="InterPro" id="IPR046885">
    <property type="entry name" value="MnmA-like_C"/>
</dbReference>
<dbReference type="InterPro" id="IPR046884">
    <property type="entry name" value="MnmA-like_central"/>
</dbReference>
<dbReference type="InterPro" id="IPR023382">
    <property type="entry name" value="MnmA-like_central_sf"/>
</dbReference>
<dbReference type="InterPro" id="IPR014729">
    <property type="entry name" value="Rossmann-like_a/b/a_fold"/>
</dbReference>
<dbReference type="NCBIfam" id="NF001138">
    <property type="entry name" value="PRK00143.1"/>
    <property type="match status" value="1"/>
</dbReference>
<dbReference type="NCBIfam" id="TIGR00420">
    <property type="entry name" value="trmU"/>
    <property type="match status" value="1"/>
</dbReference>
<dbReference type="PANTHER" id="PTHR11933:SF5">
    <property type="entry name" value="MITOCHONDRIAL TRNA-SPECIFIC 2-THIOURIDYLASE 1"/>
    <property type="match status" value="1"/>
</dbReference>
<dbReference type="PANTHER" id="PTHR11933">
    <property type="entry name" value="TRNA 5-METHYLAMINOMETHYL-2-THIOURIDYLATE -METHYLTRANSFERASE"/>
    <property type="match status" value="1"/>
</dbReference>
<dbReference type="Pfam" id="PF03054">
    <property type="entry name" value="tRNA_Me_trans"/>
    <property type="match status" value="1"/>
</dbReference>
<dbReference type="Pfam" id="PF20258">
    <property type="entry name" value="tRNA_Me_trans_C"/>
    <property type="match status" value="1"/>
</dbReference>
<dbReference type="Pfam" id="PF20259">
    <property type="entry name" value="tRNA_Me_trans_M"/>
    <property type="match status" value="1"/>
</dbReference>
<dbReference type="SUPFAM" id="SSF52402">
    <property type="entry name" value="Adenine nucleotide alpha hydrolases-like"/>
    <property type="match status" value="1"/>
</dbReference>
<name>MNMA_GLOC7</name>
<feature type="chain" id="PRO_1000198608" description="tRNA-specific 2-thiouridylase MnmA">
    <location>
        <begin position="1"/>
        <end position="349"/>
    </location>
</feature>
<feature type="region of interest" description="Interaction with tRNA" evidence="1">
    <location>
        <begin position="143"/>
        <end position="145"/>
    </location>
</feature>
<feature type="region of interest" description="Interaction with tRNA" evidence="1">
    <location>
        <begin position="298"/>
        <end position="299"/>
    </location>
</feature>
<feature type="active site" description="Nucleophile" evidence="1">
    <location>
        <position position="94"/>
    </location>
</feature>
<feature type="active site" description="Cysteine persulfide intermediate" evidence="1">
    <location>
        <position position="193"/>
    </location>
</feature>
<feature type="binding site" evidence="1">
    <location>
        <begin position="7"/>
        <end position="14"/>
    </location>
    <ligand>
        <name>ATP</name>
        <dbReference type="ChEBI" id="CHEBI:30616"/>
    </ligand>
</feature>
<feature type="binding site" evidence="1">
    <location>
        <position position="33"/>
    </location>
    <ligand>
        <name>ATP</name>
        <dbReference type="ChEBI" id="CHEBI:30616"/>
    </ligand>
</feature>
<feature type="binding site" evidence="1">
    <location>
        <position position="119"/>
    </location>
    <ligand>
        <name>ATP</name>
        <dbReference type="ChEBI" id="CHEBI:30616"/>
    </ligand>
</feature>
<feature type="site" description="Interaction with tRNA" evidence="1">
    <location>
        <position position="120"/>
    </location>
</feature>
<feature type="site" description="Interaction with tRNA" evidence="1">
    <location>
        <position position="331"/>
    </location>
</feature>
<feature type="disulfide bond" description="Alternate" evidence="1">
    <location>
        <begin position="94"/>
        <end position="193"/>
    </location>
</feature>
<comment type="function">
    <text evidence="1">Catalyzes the 2-thiolation of uridine at the wobble position (U34) of tRNA, leading to the formation of s(2)U34.</text>
</comment>
<comment type="catalytic activity">
    <reaction evidence="1">
        <text>S-sulfanyl-L-cysteinyl-[protein] + uridine(34) in tRNA + AH2 + ATP = 2-thiouridine(34) in tRNA + L-cysteinyl-[protein] + A + AMP + diphosphate + H(+)</text>
        <dbReference type="Rhea" id="RHEA:47032"/>
        <dbReference type="Rhea" id="RHEA-COMP:10131"/>
        <dbReference type="Rhea" id="RHEA-COMP:11726"/>
        <dbReference type="Rhea" id="RHEA-COMP:11727"/>
        <dbReference type="Rhea" id="RHEA-COMP:11728"/>
        <dbReference type="ChEBI" id="CHEBI:13193"/>
        <dbReference type="ChEBI" id="CHEBI:15378"/>
        <dbReference type="ChEBI" id="CHEBI:17499"/>
        <dbReference type="ChEBI" id="CHEBI:29950"/>
        <dbReference type="ChEBI" id="CHEBI:30616"/>
        <dbReference type="ChEBI" id="CHEBI:33019"/>
        <dbReference type="ChEBI" id="CHEBI:61963"/>
        <dbReference type="ChEBI" id="CHEBI:65315"/>
        <dbReference type="ChEBI" id="CHEBI:87170"/>
        <dbReference type="ChEBI" id="CHEBI:456215"/>
        <dbReference type="EC" id="2.8.1.13"/>
    </reaction>
</comment>
<comment type="subcellular location">
    <subcellularLocation>
        <location evidence="1">Cytoplasm</location>
    </subcellularLocation>
</comment>
<comment type="similarity">
    <text evidence="1">Belongs to the MnmA/TRMU family.</text>
</comment>
<sequence length="349" mass="38543">MNRVVVGLSGGVDSSTAAASLHHQGYDVVGLTLWLMKGKGQCCSEGMVDAAFICEQLGIPHHIVDSRDVFEKNIIDYLVSGYEVGITPLPCSQCNRAVKFGPMLNYARQELGIDRIATGHYARIGYDEVSGRYQLLRAVDRNKDQSYFLYDLTQDLLAATLFPLGNQTKEETRRIAHEFGLKTADKPESQDLCLIEAHGSMQEFLDKYIKQKEGDIVDLKGKVLGKHKGIHHYTIGQRKGLGVAAPEPLYVVKLDPIMNRVIVGNRADAGQSECNVSRMNWVSIPDPSTPIQTEAQVRYRSFPVRVNVIPLGDNRITLVFDEPQFGITPGQAAVLYQGDILLGGGIIEK</sequence>
<accession>B7KHE5</accession>
<reference key="1">
    <citation type="journal article" date="2011" name="MBio">
        <title>Novel metabolic attributes of the genus Cyanothece, comprising a group of unicellular nitrogen-fixing Cyanobacteria.</title>
        <authorList>
            <person name="Bandyopadhyay A."/>
            <person name="Elvitigala T."/>
            <person name="Welsh E."/>
            <person name="Stockel J."/>
            <person name="Liberton M."/>
            <person name="Min H."/>
            <person name="Sherman L.A."/>
            <person name="Pakrasi H.B."/>
        </authorList>
    </citation>
    <scope>NUCLEOTIDE SEQUENCE [LARGE SCALE GENOMIC DNA]</scope>
    <source>
        <strain>PCC 7424</strain>
    </source>
</reference>
<keyword id="KW-0067">ATP-binding</keyword>
<keyword id="KW-0963">Cytoplasm</keyword>
<keyword id="KW-1015">Disulfide bond</keyword>
<keyword id="KW-0547">Nucleotide-binding</keyword>
<keyword id="KW-1185">Reference proteome</keyword>
<keyword id="KW-0694">RNA-binding</keyword>
<keyword id="KW-0808">Transferase</keyword>
<keyword id="KW-0819">tRNA processing</keyword>
<keyword id="KW-0820">tRNA-binding</keyword>
<gene>
    <name evidence="1" type="primary">mnmA</name>
    <name type="ordered locus">PCC7424_2218</name>
</gene>
<protein>
    <recommendedName>
        <fullName evidence="1">tRNA-specific 2-thiouridylase MnmA</fullName>
        <ecNumber evidence="1">2.8.1.13</ecNumber>
    </recommendedName>
</protein>